<accession>B2V307</accession>
<comment type="subunit">
    <text evidence="1">Homodimer.</text>
</comment>
<comment type="similarity">
    <text evidence="1">Belongs to the UPF0210 family.</text>
</comment>
<name>Y1879_CLOBA</name>
<reference key="1">
    <citation type="submission" date="2008-05" db="EMBL/GenBank/DDBJ databases">
        <title>Complete genome sequence of Clostridium botulinum E3 str. Alaska E43.</title>
        <authorList>
            <person name="Brinkac L.M."/>
            <person name="Brown J.L."/>
            <person name="Bruce D."/>
            <person name="Detter C."/>
            <person name="Munk C."/>
            <person name="Smith L.A."/>
            <person name="Smith T.J."/>
            <person name="Sutton G."/>
            <person name="Brettin T.S."/>
        </authorList>
    </citation>
    <scope>NUCLEOTIDE SEQUENCE [LARGE SCALE GENOMIC DNA]</scope>
    <source>
        <strain>Alaska E43 / Type E3</strain>
    </source>
</reference>
<protein>
    <recommendedName>
        <fullName evidence="1">UPF0210 protein CLH_1879</fullName>
    </recommendedName>
</protein>
<evidence type="ECO:0000255" key="1">
    <source>
        <dbReference type="HAMAP-Rule" id="MF_01221"/>
    </source>
</evidence>
<sequence>MNTNKILETIKMIEEEKLDIRTITMGISLLDCIDSDGEKARMKIYDKITKSAEHLVEVGRQIESEYGIPIVNKRVSVTPISIIAGATNEDSYVKFAQTLDKAADTLGIDFLGGFSALVQKGCTKGDKILISSIPEALAITQKVCASVNVGCTKSGINMNAVRDMGEIIKKTAELTKDKKGFGCAKLVVFANAVEDNPFMAGAFHGVGEAEKIINVGVSGPGVVKRALEKVRGQSFDIVAETIKKTAFKITRMGELVANEASRRLDVPFGIVDLSLAPTPAVGDSVAEILEEIGLERVGTHGTIAALAMLNDAVKKGGVMACSHVGGLSGAFIPVSEDAGMIEAVINGSLNLEKLEGMTCVCSVGLDMIAIPGDTPASTISAMIADEAAIGVINNKTTAVRIIPAPGCKVGDMVEFGGLLGTAPVMKINENSSELFAQRGGRIPAPIHSFKN</sequence>
<organism>
    <name type="scientific">Clostridium botulinum (strain Alaska E43 / Type E3)</name>
    <dbReference type="NCBI Taxonomy" id="508767"/>
    <lineage>
        <taxon>Bacteria</taxon>
        <taxon>Bacillati</taxon>
        <taxon>Bacillota</taxon>
        <taxon>Clostridia</taxon>
        <taxon>Eubacteriales</taxon>
        <taxon>Clostridiaceae</taxon>
        <taxon>Clostridium</taxon>
    </lineage>
</organism>
<proteinExistence type="inferred from homology"/>
<dbReference type="EMBL" id="CP001078">
    <property type="protein sequence ID" value="ACD51453.1"/>
    <property type="molecule type" value="Genomic_DNA"/>
</dbReference>
<dbReference type="RefSeq" id="WP_012449811.1">
    <property type="nucleotide sequence ID" value="NC_010723.1"/>
</dbReference>
<dbReference type="SMR" id="B2V307"/>
<dbReference type="KEGG" id="cbt:CLH_1879"/>
<dbReference type="HOGENOM" id="CLU_048704_0_0_9"/>
<dbReference type="CDD" id="cd08025">
    <property type="entry name" value="RNR_PFL_like_DUF711"/>
    <property type="match status" value="1"/>
</dbReference>
<dbReference type="Gene3D" id="3.20.70.20">
    <property type="match status" value="1"/>
</dbReference>
<dbReference type="HAMAP" id="MF_01221">
    <property type="entry name" value="UPF0210"/>
    <property type="match status" value="1"/>
</dbReference>
<dbReference type="InterPro" id="IPR007841">
    <property type="entry name" value="UPF0210"/>
</dbReference>
<dbReference type="NCBIfam" id="NF003700">
    <property type="entry name" value="PRK05313.1"/>
    <property type="match status" value="1"/>
</dbReference>
<dbReference type="PANTHER" id="PTHR37560:SF1">
    <property type="entry name" value="UPF0210 PROTEIN MJ1665"/>
    <property type="match status" value="1"/>
</dbReference>
<dbReference type="PANTHER" id="PTHR37560">
    <property type="entry name" value="UPF0210 PROTEIN SPR0218"/>
    <property type="match status" value="1"/>
</dbReference>
<dbReference type="Pfam" id="PF05167">
    <property type="entry name" value="DUF711"/>
    <property type="match status" value="1"/>
</dbReference>
<dbReference type="SUPFAM" id="SSF51998">
    <property type="entry name" value="PFL-like glycyl radical enzymes"/>
    <property type="match status" value="1"/>
</dbReference>
<feature type="chain" id="PRO_1000139224" description="UPF0210 protein CLH_1879">
    <location>
        <begin position="1"/>
        <end position="451"/>
    </location>
</feature>
<gene>
    <name type="ordered locus">CLH_1879</name>
</gene>